<comment type="function">
    <text evidence="1">Involved in the biosynthesis of the chorismate, which leads to the biosynthesis of aromatic amino acids. Catalyzes the reversible NADPH linked reduction of 3-dehydroshikimate (DHSA) to yield shikimate (SA).</text>
</comment>
<comment type="catalytic activity">
    <reaction evidence="1">
        <text>shikimate + NADP(+) = 3-dehydroshikimate + NADPH + H(+)</text>
        <dbReference type="Rhea" id="RHEA:17737"/>
        <dbReference type="ChEBI" id="CHEBI:15378"/>
        <dbReference type="ChEBI" id="CHEBI:16630"/>
        <dbReference type="ChEBI" id="CHEBI:36208"/>
        <dbReference type="ChEBI" id="CHEBI:57783"/>
        <dbReference type="ChEBI" id="CHEBI:58349"/>
        <dbReference type="EC" id="1.1.1.25"/>
    </reaction>
</comment>
<comment type="pathway">
    <text evidence="1">Metabolic intermediate biosynthesis; chorismate biosynthesis; chorismate from D-erythrose 4-phosphate and phosphoenolpyruvate: step 4/7.</text>
</comment>
<comment type="subunit">
    <text evidence="1">Homodimer.</text>
</comment>
<comment type="similarity">
    <text evidence="1">Belongs to the shikimate dehydrogenase family.</text>
</comment>
<dbReference type="EC" id="1.1.1.25" evidence="1"/>
<dbReference type="EMBL" id="CP000264">
    <property type="protein sequence ID" value="ABD53113.1"/>
    <property type="molecule type" value="Genomic_DNA"/>
</dbReference>
<dbReference type="RefSeq" id="WP_011453322.1">
    <property type="nucleotide sequence ID" value="NC_007802.1"/>
</dbReference>
<dbReference type="SMR" id="Q28VZ9"/>
<dbReference type="STRING" id="290400.Jann_0196"/>
<dbReference type="KEGG" id="jan:Jann_0196"/>
<dbReference type="eggNOG" id="COG0169">
    <property type="taxonomic scope" value="Bacteria"/>
</dbReference>
<dbReference type="HOGENOM" id="CLU_044063_2_0_5"/>
<dbReference type="OrthoDB" id="9792692at2"/>
<dbReference type="UniPathway" id="UPA00053">
    <property type="reaction ID" value="UER00087"/>
</dbReference>
<dbReference type="Proteomes" id="UP000008326">
    <property type="component" value="Chromosome"/>
</dbReference>
<dbReference type="GO" id="GO:0005829">
    <property type="term" value="C:cytosol"/>
    <property type="evidence" value="ECO:0007669"/>
    <property type="project" value="TreeGrafter"/>
</dbReference>
<dbReference type="GO" id="GO:0050661">
    <property type="term" value="F:NADP binding"/>
    <property type="evidence" value="ECO:0007669"/>
    <property type="project" value="InterPro"/>
</dbReference>
<dbReference type="GO" id="GO:0004764">
    <property type="term" value="F:shikimate 3-dehydrogenase (NADP+) activity"/>
    <property type="evidence" value="ECO:0007669"/>
    <property type="project" value="UniProtKB-UniRule"/>
</dbReference>
<dbReference type="GO" id="GO:0008652">
    <property type="term" value="P:amino acid biosynthetic process"/>
    <property type="evidence" value="ECO:0007669"/>
    <property type="project" value="UniProtKB-KW"/>
</dbReference>
<dbReference type="GO" id="GO:0009073">
    <property type="term" value="P:aromatic amino acid family biosynthetic process"/>
    <property type="evidence" value="ECO:0007669"/>
    <property type="project" value="UniProtKB-KW"/>
</dbReference>
<dbReference type="GO" id="GO:0009423">
    <property type="term" value="P:chorismate biosynthetic process"/>
    <property type="evidence" value="ECO:0007669"/>
    <property type="project" value="UniProtKB-UniRule"/>
</dbReference>
<dbReference type="GO" id="GO:0019632">
    <property type="term" value="P:shikimate metabolic process"/>
    <property type="evidence" value="ECO:0007669"/>
    <property type="project" value="InterPro"/>
</dbReference>
<dbReference type="CDD" id="cd01065">
    <property type="entry name" value="NAD_bind_Shikimate_DH"/>
    <property type="match status" value="1"/>
</dbReference>
<dbReference type="Gene3D" id="3.40.50.10860">
    <property type="entry name" value="Leucine Dehydrogenase, chain A, domain 1"/>
    <property type="match status" value="1"/>
</dbReference>
<dbReference type="Gene3D" id="3.40.50.720">
    <property type="entry name" value="NAD(P)-binding Rossmann-like Domain"/>
    <property type="match status" value="1"/>
</dbReference>
<dbReference type="HAMAP" id="MF_00222">
    <property type="entry name" value="Shikimate_DH_AroE"/>
    <property type="match status" value="1"/>
</dbReference>
<dbReference type="InterPro" id="IPR046346">
    <property type="entry name" value="Aminoacid_DH-like_N_sf"/>
</dbReference>
<dbReference type="InterPro" id="IPR036291">
    <property type="entry name" value="NAD(P)-bd_dom_sf"/>
</dbReference>
<dbReference type="InterPro" id="IPR011342">
    <property type="entry name" value="Shikimate_DH"/>
</dbReference>
<dbReference type="InterPro" id="IPR013708">
    <property type="entry name" value="Shikimate_DH-bd_N"/>
</dbReference>
<dbReference type="InterPro" id="IPR022893">
    <property type="entry name" value="Shikimate_DH_fam"/>
</dbReference>
<dbReference type="InterPro" id="IPR006151">
    <property type="entry name" value="Shikm_DH/Glu-tRNA_Rdtase"/>
</dbReference>
<dbReference type="NCBIfam" id="TIGR00507">
    <property type="entry name" value="aroE"/>
    <property type="match status" value="1"/>
</dbReference>
<dbReference type="NCBIfam" id="NF001312">
    <property type="entry name" value="PRK00258.1-4"/>
    <property type="match status" value="1"/>
</dbReference>
<dbReference type="PANTHER" id="PTHR21089:SF1">
    <property type="entry name" value="BIFUNCTIONAL 3-DEHYDROQUINATE DEHYDRATASE_SHIKIMATE DEHYDROGENASE, CHLOROPLASTIC"/>
    <property type="match status" value="1"/>
</dbReference>
<dbReference type="PANTHER" id="PTHR21089">
    <property type="entry name" value="SHIKIMATE DEHYDROGENASE"/>
    <property type="match status" value="1"/>
</dbReference>
<dbReference type="Pfam" id="PF01488">
    <property type="entry name" value="Shikimate_DH"/>
    <property type="match status" value="1"/>
</dbReference>
<dbReference type="Pfam" id="PF08501">
    <property type="entry name" value="Shikimate_dh_N"/>
    <property type="match status" value="1"/>
</dbReference>
<dbReference type="SUPFAM" id="SSF53223">
    <property type="entry name" value="Aminoacid dehydrogenase-like, N-terminal domain"/>
    <property type="match status" value="1"/>
</dbReference>
<dbReference type="SUPFAM" id="SSF51735">
    <property type="entry name" value="NAD(P)-binding Rossmann-fold domains"/>
    <property type="match status" value="1"/>
</dbReference>
<gene>
    <name evidence="1" type="primary">aroE</name>
    <name type="ordered locus">Jann_0196</name>
</gene>
<proteinExistence type="inferred from homology"/>
<feature type="chain" id="PRO_0000325126" description="Shikimate dehydrogenase (NADP(+))">
    <location>
        <begin position="1"/>
        <end position="278"/>
    </location>
</feature>
<feature type="active site" description="Proton acceptor" evidence="1">
    <location>
        <position position="70"/>
    </location>
</feature>
<feature type="binding site" evidence="1">
    <location>
        <begin position="19"/>
        <end position="21"/>
    </location>
    <ligand>
        <name>shikimate</name>
        <dbReference type="ChEBI" id="CHEBI:36208"/>
    </ligand>
</feature>
<feature type="binding site" evidence="1">
    <location>
        <position position="66"/>
    </location>
    <ligand>
        <name>shikimate</name>
        <dbReference type="ChEBI" id="CHEBI:36208"/>
    </ligand>
</feature>
<feature type="binding site" evidence="1">
    <location>
        <position position="82"/>
    </location>
    <ligand>
        <name>NADP(+)</name>
        <dbReference type="ChEBI" id="CHEBI:58349"/>
    </ligand>
</feature>
<feature type="binding site" evidence="1">
    <location>
        <position position="91"/>
    </location>
    <ligand>
        <name>shikimate</name>
        <dbReference type="ChEBI" id="CHEBI:36208"/>
    </ligand>
</feature>
<feature type="binding site" evidence="1">
    <location>
        <position position="107"/>
    </location>
    <ligand>
        <name>shikimate</name>
        <dbReference type="ChEBI" id="CHEBI:36208"/>
    </ligand>
</feature>
<feature type="binding site" evidence="1">
    <location>
        <begin position="133"/>
        <end position="137"/>
    </location>
    <ligand>
        <name>NADP(+)</name>
        <dbReference type="ChEBI" id="CHEBI:58349"/>
    </ligand>
</feature>
<feature type="binding site" evidence="1">
    <location>
        <begin position="157"/>
        <end position="162"/>
    </location>
    <ligand>
        <name>NADP(+)</name>
        <dbReference type="ChEBI" id="CHEBI:58349"/>
    </ligand>
</feature>
<feature type="binding site" evidence="1">
    <location>
        <position position="222"/>
    </location>
    <ligand>
        <name>NADP(+)</name>
        <dbReference type="ChEBI" id="CHEBI:58349"/>
    </ligand>
</feature>
<feature type="binding site" evidence="1">
    <location>
        <position position="224"/>
    </location>
    <ligand>
        <name>shikimate</name>
        <dbReference type="ChEBI" id="CHEBI:36208"/>
    </ligand>
</feature>
<feature type="binding site" evidence="1">
    <location>
        <position position="245"/>
    </location>
    <ligand>
        <name>NADP(+)</name>
        <dbReference type="ChEBI" id="CHEBI:58349"/>
    </ligand>
</feature>
<reference key="1">
    <citation type="submission" date="2006-02" db="EMBL/GenBank/DDBJ databases">
        <title>Complete sequence of chromosome of Jannaschia sp. CCS1.</title>
        <authorList>
            <consortium name="US DOE Joint Genome Institute"/>
            <person name="Copeland A."/>
            <person name="Lucas S."/>
            <person name="Lapidus A."/>
            <person name="Barry K."/>
            <person name="Detter J.C."/>
            <person name="Glavina del Rio T."/>
            <person name="Hammon N."/>
            <person name="Israni S."/>
            <person name="Pitluck S."/>
            <person name="Brettin T."/>
            <person name="Bruce D."/>
            <person name="Han C."/>
            <person name="Tapia R."/>
            <person name="Gilna P."/>
            <person name="Chertkov O."/>
            <person name="Saunders E."/>
            <person name="Schmutz J."/>
            <person name="Larimer F."/>
            <person name="Land M."/>
            <person name="Kyrpides N."/>
            <person name="Lykidis A."/>
            <person name="Moran M.A."/>
            <person name="Belas R."/>
            <person name="Ye W."/>
            <person name="Buchan A."/>
            <person name="Gonzalez J.M."/>
            <person name="Schell M.A."/>
            <person name="Richardson P."/>
        </authorList>
    </citation>
    <scope>NUCLEOTIDE SEQUENCE [LARGE SCALE GENOMIC DNA]</scope>
    <source>
        <strain>CCS1</strain>
    </source>
</reference>
<sequence>MTRDTIPLAGVIGDPISHSLSPRLHGHWLRRYGLQGHYVPLHVNHANLETVLRTLPLMGFVGVNVTLPHKEHVLSIADSVTDRAALIGAANTLTFTANEQIQADNTDGMGFLSNIRQALPGWSASAGPALVLGSGGAAKAIVSALVSDGAPVVHVANRTRARADGLKEQFGARVSPSDWTHIPDLIGDAALIVNTTSLGMAGQSPLSLDLSRLSPPTVVTDIVYAPLQTNLLRDASIRGCETVDGLGMLLHQAVPGFERWFNYTPTVDEDLREAVLAG</sequence>
<organism>
    <name type="scientific">Jannaschia sp. (strain CCS1)</name>
    <dbReference type="NCBI Taxonomy" id="290400"/>
    <lineage>
        <taxon>Bacteria</taxon>
        <taxon>Pseudomonadati</taxon>
        <taxon>Pseudomonadota</taxon>
        <taxon>Alphaproteobacteria</taxon>
        <taxon>Rhodobacterales</taxon>
        <taxon>Roseobacteraceae</taxon>
        <taxon>Jannaschia</taxon>
    </lineage>
</organism>
<keyword id="KW-0028">Amino-acid biosynthesis</keyword>
<keyword id="KW-0057">Aromatic amino acid biosynthesis</keyword>
<keyword id="KW-0521">NADP</keyword>
<keyword id="KW-0560">Oxidoreductase</keyword>
<keyword id="KW-1185">Reference proteome</keyword>
<name>AROE_JANSC</name>
<protein>
    <recommendedName>
        <fullName evidence="1">Shikimate dehydrogenase (NADP(+))</fullName>
        <shortName evidence="1">SDH</shortName>
        <ecNumber evidence="1">1.1.1.25</ecNumber>
    </recommendedName>
</protein>
<accession>Q28VZ9</accession>
<evidence type="ECO:0000255" key="1">
    <source>
        <dbReference type="HAMAP-Rule" id="MF_00222"/>
    </source>
</evidence>